<accession>P56476</accession>
<accession>Q6PEP0</accession>
<keyword id="KW-0024">Alternative initiation</keyword>
<keyword id="KW-1003">Cell membrane</keyword>
<keyword id="KW-0868">Chloride</keyword>
<keyword id="KW-0869">Chloride channel</keyword>
<keyword id="KW-1015">Disulfide bond</keyword>
<keyword id="KW-0325">Glycoprotein</keyword>
<keyword id="KW-0407">Ion channel</keyword>
<keyword id="KW-0406">Ion transport</keyword>
<keyword id="KW-0472">Membrane</keyword>
<keyword id="KW-0628">Postsynaptic cell membrane</keyword>
<keyword id="KW-1185">Reference proteome</keyword>
<keyword id="KW-0732">Signal</keyword>
<keyword id="KW-0770">Synapse</keyword>
<keyword id="KW-0812">Transmembrane</keyword>
<keyword id="KW-1133">Transmembrane helix</keyword>
<keyword id="KW-0813">Transport</keyword>
<name>GBRR2_MOUSE</name>
<dbReference type="EMBL" id="AF024621">
    <property type="protein sequence ID" value="AAB81965.1"/>
    <property type="molecule type" value="mRNA"/>
</dbReference>
<dbReference type="EMBL" id="CH466538">
    <property type="protein sequence ID" value="EDL05492.1"/>
    <property type="molecule type" value="Genomic_DNA"/>
</dbReference>
<dbReference type="EMBL" id="BC057957">
    <property type="protein sequence ID" value="AAH57957.2"/>
    <property type="molecule type" value="mRNA"/>
</dbReference>
<dbReference type="CCDS" id="CCDS18020.1">
    <molecule id="P56476-2"/>
</dbReference>
<dbReference type="RefSeq" id="NP_032102.2">
    <molecule id="P56476-2"/>
    <property type="nucleotide sequence ID" value="NM_008076.4"/>
</dbReference>
<dbReference type="SMR" id="P56476"/>
<dbReference type="FunCoup" id="P56476">
    <property type="interactions" value="376"/>
</dbReference>
<dbReference type="STRING" id="10090.ENSMUSP00000024035"/>
<dbReference type="GlyCosmos" id="P56476">
    <property type="glycosylation" value="2 sites, No reported glycans"/>
</dbReference>
<dbReference type="GlyGen" id="P56476">
    <property type="glycosylation" value="2 sites"/>
</dbReference>
<dbReference type="PhosphoSitePlus" id="P56476"/>
<dbReference type="PaxDb" id="10090-ENSMUSP00000024035"/>
<dbReference type="Antibodypedia" id="18718">
    <property type="antibodies" value="119 antibodies from 24 providers"/>
</dbReference>
<dbReference type="DNASU" id="14409"/>
<dbReference type="Ensembl" id="ENSMUST00000024035.9">
    <molecule id="P56476-2"/>
    <property type="protein sequence ID" value="ENSMUSP00000024035.3"/>
    <property type="gene ID" value="ENSMUSG00000023267.11"/>
</dbReference>
<dbReference type="Ensembl" id="ENSMUST00000108162.8">
    <molecule id="P56476-1"/>
    <property type="protein sequence ID" value="ENSMUSP00000103797.2"/>
    <property type="gene ID" value="ENSMUSG00000023267.11"/>
</dbReference>
<dbReference type="GeneID" id="14409"/>
<dbReference type="KEGG" id="mmu:14409"/>
<dbReference type="UCSC" id="uc008sfq.1">
    <molecule id="P56476-2"/>
    <property type="organism name" value="mouse"/>
</dbReference>
<dbReference type="AGR" id="MGI:95626"/>
<dbReference type="CTD" id="2570"/>
<dbReference type="MGI" id="MGI:95626">
    <property type="gene designation" value="Gabrr2"/>
</dbReference>
<dbReference type="VEuPathDB" id="HostDB:ENSMUSG00000023267"/>
<dbReference type="eggNOG" id="KOG3643">
    <property type="taxonomic scope" value="Eukaryota"/>
</dbReference>
<dbReference type="GeneTree" id="ENSGT00940000156864"/>
<dbReference type="HOGENOM" id="CLU_010920_0_1_1"/>
<dbReference type="InParanoid" id="P56476"/>
<dbReference type="OMA" id="KRWTGHL"/>
<dbReference type="OrthoDB" id="34910at9989"/>
<dbReference type="TreeFam" id="TF315453"/>
<dbReference type="Reactome" id="R-MMU-977443">
    <property type="pathway name" value="GABA receptor activation"/>
</dbReference>
<dbReference type="BioGRID-ORCS" id="14409">
    <property type="hits" value="5 hits in 80 CRISPR screens"/>
</dbReference>
<dbReference type="ChiTaRS" id="Gabrr2">
    <property type="organism name" value="mouse"/>
</dbReference>
<dbReference type="PRO" id="PR:P56476"/>
<dbReference type="Proteomes" id="UP000000589">
    <property type="component" value="Chromosome 4"/>
</dbReference>
<dbReference type="RNAct" id="P56476">
    <property type="molecule type" value="protein"/>
</dbReference>
<dbReference type="Bgee" id="ENSMUSG00000023267">
    <property type="expression patterns" value="Expressed in retinal neural layer and 51 other cell types or tissues"/>
</dbReference>
<dbReference type="ExpressionAtlas" id="P56476">
    <property type="expression patterns" value="baseline and differential"/>
</dbReference>
<dbReference type="GO" id="GO:0030424">
    <property type="term" value="C:axon"/>
    <property type="evidence" value="ECO:0000304"/>
    <property type="project" value="MGI"/>
</dbReference>
<dbReference type="GO" id="GO:0034707">
    <property type="term" value="C:chloride channel complex"/>
    <property type="evidence" value="ECO:0007669"/>
    <property type="project" value="UniProtKB-KW"/>
</dbReference>
<dbReference type="GO" id="GO:0098982">
    <property type="term" value="C:GABA-ergic synapse"/>
    <property type="evidence" value="ECO:0007669"/>
    <property type="project" value="Ensembl"/>
</dbReference>
<dbReference type="GO" id="GO:0097708">
    <property type="term" value="C:intracellular vesicle"/>
    <property type="evidence" value="ECO:0000314"/>
    <property type="project" value="MGI"/>
</dbReference>
<dbReference type="GO" id="GO:0045211">
    <property type="term" value="C:postsynaptic membrane"/>
    <property type="evidence" value="ECO:0007669"/>
    <property type="project" value="UniProtKB-SubCell"/>
</dbReference>
<dbReference type="GO" id="GO:0004890">
    <property type="term" value="F:GABA-A receptor activity"/>
    <property type="evidence" value="ECO:0000315"/>
    <property type="project" value="MGI"/>
</dbReference>
<dbReference type="GO" id="GO:0022851">
    <property type="term" value="F:GABA-gated chloride ion channel activity"/>
    <property type="evidence" value="ECO:0000250"/>
    <property type="project" value="UniProtKB"/>
</dbReference>
<dbReference type="GO" id="GO:0019904">
    <property type="term" value="F:protein domain specific binding"/>
    <property type="evidence" value="ECO:0007669"/>
    <property type="project" value="Ensembl"/>
</dbReference>
<dbReference type="GO" id="GO:1904315">
    <property type="term" value="F:transmitter-gated monoatomic ion channel activity involved in regulation of postsynaptic membrane potential"/>
    <property type="evidence" value="ECO:0007669"/>
    <property type="project" value="Ensembl"/>
</dbReference>
<dbReference type="GO" id="GO:0006821">
    <property type="term" value="P:chloride transport"/>
    <property type="evidence" value="ECO:0000304"/>
    <property type="project" value="MGI"/>
</dbReference>
<dbReference type="GO" id="GO:0007214">
    <property type="term" value="P:gamma-aminobutyric acid signaling pathway"/>
    <property type="evidence" value="ECO:0000315"/>
    <property type="project" value="MGI"/>
</dbReference>
<dbReference type="GO" id="GO:0007601">
    <property type="term" value="P:visual perception"/>
    <property type="evidence" value="ECO:0000315"/>
    <property type="project" value="MGI"/>
</dbReference>
<dbReference type="CDD" id="cd19005">
    <property type="entry name" value="LGIC_ECD_GABAAR_rho"/>
    <property type="match status" value="1"/>
</dbReference>
<dbReference type="CDD" id="cd19059">
    <property type="entry name" value="LGIC_TM_GABAAR_rho"/>
    <property type="match status" value="1"/>
</dbReference>
<dbReference type="FunFam" id="2.70.170.10:FF:000007">
    <property type="entry name" value="Gamma-aminobutyric acid type A receptor rho2 subunit"/>
    <property type="match status" value="1"/>
</dbReference>
<dbReference type="FunFam" id="1.20.58.390:FF:000005">
    <property type="entry name" value="Putative gamma-aminobutyric acid receptor subunit rho-2-like"/>
    <property type="match status" value="1"/>
</dbReference>
<dbReference type="Gene3D" id="2.70.170.10">
    <property type="entry name" value="Neurotransmitter-gated ion-channel ligand-binding domain"/>
    <property type="match status" value="1"/>
</dbReference>
<dbReference type="Gene3D" id="1.20.58.390">
    <property type="entry name" value="Neurotransmitter-gated ion-channel transmembrane domain"/>
    <property type="match status" value="1"/>
</dbReference>
<dbReference type="InterPro" id="IPR006028">
    <property type="entry name" value="GABAA/Glycine_rcpt"/>
</dbReference>
<dbReference type="InterPro" id="IPR008059">
    <property type="entry name" value="GABAAa_rho2_rcpt"/>
</dbReference>
<dbReference type="InterPro" id="IPR008057">
    <property type="entry name" value="GABAAa_rho_rcpt"/>
</dbReference>
<dbReference type="InterPro" id="IPR006202">
    <property type="entry name" value="Neur_chan_lig-bd"/>
</dbReference>
<dbReference type="InterPro" id="IPR036734">
    <property type="entry name" value="Neur_chan_lig-bd_sf"/>
</dbReference>
<dbReference type="InterPro" id="IPR006201">
    <property type="entry name" value="Neur_channel"/>
</dbReference>
<dbReference type="InterPro" id="IPR036719">
    <property type="entry name" value="Neuro-gated_channel_TM_sf"/>
</dbReference>
<dbReference type="InterPro" id="IPR038050">
    <property type="entry name" value="Neuro_actylchol_rec"/>
</dbReference>
<dbReference type="InterPro" id="IPR006029">
    <property type="entry name" value="Neurotrans-gated_channel_TM"/>
</dbReference>
<dbReference type="InterPro" id="IPR018000">
    <property type="entry name" value="Neurotransmitter_ion_chnl_CS"/>
</dbReference>
<dbReference type="NCBIfam" id="TIGR00860">
    <property type="entry name" value="LIC"/>
    <property type="match status" value="1"/>
</dbReference>
<dbReference type="PANTHER" id="PTHR18945">
    <property type="entry name" value="NEUROTRANSMITTER GATED ION CHANNEL"/>
    <property type="match status" value="1"/>
</dbReference>
<dbReference type="Pfam" id="PF02931">
    <property type="entry name" value="Neur_chan_LBD"/>
    <property type="match status" value="1"/>
</dbReference>
<dbReference type="Pfam" id="PF02932">
    <property type="entry name" value="Neur_chan_memb"/>
    <property type="match status" value="1"/>
</dbReference>
<dbReference type="PRINTS" id="PR00253">
    <property type="entry name" value="GABAARECEPTR"/>
</dbReference>
<dbReference type="PRINTS" id="PR01670">
    <property type="entry name" value="GABAARRHO"/>
</dbReference>
<dbReference type="PRINTS" id="PR01672">
    <property type="entry name" value="GABAARRHO2"/>
</dbReference>
<dbReference type="PRINTS" id="PR00252">
    <property type="entry name" value="NRIONCHANNEL"/>
</dbReference>
<dbReference type="SUPFAM" id="SSF90112">
    <property type="entry name" value="Neurotransmitter-gated ion-channel transmembrane pore"/>
    <property type="match status" value="1"/>
</dbReference>
<dbReference type="SUPFAM" id="SSF63712">
    <property type="entry name" value="Nicotinic receptor ligand binding domain-like"/>
    <property type="match status" value="1"/>
</dbReference>
<dbReference type="PROSITE" id="PS00236">
    <property type="entry name" value="NEUROTR_ION_CHANNEL"/>
    <property type="match status" value="1"/>
</dbReference>
<proteinExistence type="evidence at protein level"/>
<evidence type="ECO:0000250" key="1">
    <source>
        <dbReference type="UniProtKB" id="P24046"/>
    </source>
</evidence>
<evidence type="ECO:0000250" key="2">
    <source>
        <dbReference type="UniProtKB" id="P47742"/>
    </source>
</evidence>
<evidence type="ECO:0000255" key="3"/>
<evidence type="ECO:0000269" key="4">
    <source>
    </source>
</evidence>
<evidence type="ECO:0000269" key="5">
    <source>
    </source>
</evidence>
<evidence type="ECO:0000303" key="6">
    <source>
    </source>
</evidence>
<evidence type="ECO:0000303" key="7">
    <source>
    </source>
</evidence>
<evidence type="ECO:0000305" key="8"/>
<evidence type="ECO:0000305" key="9">
    <source>
    </source>
</evidence>
<evidence type="ECO:0000312" key="10">
    <source>
        <dbReference type="MGI" id="MGI:95626"/>
    </source>
</evidence>
<reference key="1">
    <citation type="journal article" date="1997" name="Abstr. - Soc. Neurosci.">
        <title>Molecular cloning of GABA rho subunits in the mouse retina.</title>
        <authorList>
            <person name="Greka A."/>
            <person name="Koolen J.A."/>
            <person name="Lipton S.A."/>
            <person name="Zhang D."/>
        </authorList>
    </citation>
    <scope>NUCLEOTIDE SEQUENCE [MRNA] (ISOFORM 1)</scope>
    <source>
        <tissue>Retina</tissue>
    </source>
</reference>
<reference key="2">
    <citation type="submission" date="2005-09" db="EMBL/GenBank/DDBJ databases">
        <authorList>
            <person name="Mural R.J."/>
            <person name="Adams M.D."/>
            <person name="Myers E.W."/>
            <person name="Smith H.O."/>
            <person name="Venter J.C."/>
        </authorList>
    </citation>
    <scope>NUCLEOTIDE SEQUENCE [LARGE SCALE GENOMIC DNA]</scope>
</reference>
<reference key="3">
    <citation type="journal article" date="2004" name="Genome Res.">
        <title>The status, quality, and expansion of the NIH full-length cDNA project: the Mammalian Gene Collection (MGC).</title>
        <authorList>
            <consortium name="The MGC Project Team"/>
        </authorList>
    </citation>
    <scope>NUCLEOTIDE SEQUENCE [LARGE SCALE MRNA] (ISOFORM 2)</scope>
    <source>
        <tissue>Eye</tissue>
    </source>
</reference>
<reference key="4">
    <citation type="journal article" date="2006" name="J. Physiol. (Lond.)">
        <title>Evidence that GABA rho subunits contribute to functional ionotropic GABA receptors in mouse cerebellar Purkinje cells.</title>
        <authorList>
            <person name="Harvey V.L."/>
            <person name="Duguid I.C."/>
            <person name="Krasel C."/>
            <person name="Stephens G.J."/>
        </authorList>
    </citation>
    <scope>FUNCTION</scope>
    <scope>TISSUE SPECIFICITY</scope>
    <scope>SUBCELLULAR LOCATION</scope>
</reference>
<reference key="5">
    <citation type="journal article" date="2014" name="Proc. Natl. Acad. Sci. U.S.A.">
        <title>GABArho subunits confer a bicuculline-insensitive component to GFAP+ cells of cerebellum.</title>
        <authorList>
            <person name="Petriz A."/>
            <person name="Reyes-Haro D."/>
            <person name="Gonzalez-Gonzalez M.A."/>
            <person name="Miledi R."/>
            <person name="Martinez-Torres A."/>
        </authorList>
    </citation>
    <scope>FUNCTION</scope>
    <scope>INTERACTION WITH GBRR1</scope>
    <scope>SUBCELLULAR LOCATION</scope>
    <scope>TISSUE SPECIFICITY</scope>
</reference>
<gene>
    <name evidence="10" type="primary">Gabrr2</name>
</gene>
<protein>
    <recommendedName>
        <fullName evidence="7">Gamma-aminobutyric acid receptor subunit rho-2</fullName>
    </recommendedName>
    <alternativeName>
        <fullName>GABA(A) receptor subunit rho-2</fullName>
        <shortName>GABAAR subunit rho-2</shortName>
    </alternativeName>
    <alternativeName>
        <fullName evidence="2">GABA(C) receptor</fullName>
    </alternativeName>
</protein>
<organism>
    <name type="scientific">Mus musculus</name>
    <name type="common">Mouse</name>
    <dbReference type="NCBI Taxonomy" id="10090"/>
    <lineage>
        <taxon>Eukaryota</taxon>
        <taxon>Metazoa</taxon>
        <taxon>Chordata</taxon>
        <taxon>Craniata</taxon>
        <taxon>Vertebrata</taxon>
        <taxon>Euteleostomi</taxon>
        <taxon>Mammalia</taxon>
        <taxon>Eutheria</taxon>
        <taxon>Euarchontoglires</taxon>
        <taxon>Glires</taxon>
        <taxon>Rodentia</taxon>
        <taxon>Myomorpha</taxon>
        <taxon>Muroidea</taxon>
        <taxon>Muridae</taxon>
        <taxon>Murinae</taxon>
        <taxon>Mus</taxon>
        <taxon>Mus</taxon>
    </lineage>
</organism>
<feature type="signal peptide" evidence="3">
    <location>
        <begin position="1"/>
        <end position="20"/>
    </location>
</feature>
<feature type="chain" id="PRO_0000000489" description="Gamma-aminobutyric acid receptor subunit rho-2" evidence="3">
    <location>
        <begin position="21"/>
        <end position="465"/>
    </location>
</feature>
<feature type="topological domain" description="Extracellular" evidence="8">
    <location>
        <begin position="21"/>
        <end position="260"/>
    </location>
</feature>
<feature type="transmembrane region" description="Helical" evidence="3">
    <location>
        <begin position="261"/>
        <end position="281"/>
    </location>
</feature>
<feature type="topological domain" description="Cytoplasmic" evidence="8">
    <location>
        <begin position="282"/>
        <end position="293"/>
    </location>
</feature>
<feature type="transmembrane region" description="Helical" evidence="3">
    <location>
        <begin position="294"/>
        <end position="314"/>
    </location>
</feature>
<feature type="topological domain" description="Extracellular" evidence="8">
    <location>
        <begin position="315"/>
        <end position="325"/>
    </location>
</feature>
<feature type="transmembrane region" description="Helical" evidence="3">
    <location>
        <begin position="326"/>
        <end position="346"/>
    </location>
</feature>
<feature type="topological domain" description="Cytoplasmic" evidence="8">
    <location>
        <begin position="347"/>
        <end position="443"/>
    </location>
</feature>
<feature type="transmembrane region" description="Helical" evidence="3">
    <location>
        <begin position="444"/>
        <end position="464"/>
    </location>
</feature>
<feature type="topological domain" description="Extracellular" evidence="8">
    <location>
        <position position="465"/>
    </location>
</feature>
<feature type="binding site" description="in chain A" evidence="1">
    <location>
        <position position="105"/>
    </location>
    <ligand>
        <name>4-aminobutanoate</name>
        <dbReference type="ChEBI" id="CHEBI:59888"/>
        <note>ligand shared between two neighboring rho subunits</note>
    </ligand>
</feature>
<feature type="binding site" description="in chain A" evidence="1">
    <location>
        <position position="169"/>
    </location>
    <ligand>
        <name>4-aminobutanoate</name>
        <dbReference type="ChEBI" id="CHEBI:59888"/>
        <note>ligand shared between two neighboring rho subunits</note>
    </ligand>
</feature>
<feature type="binding site" description="in chain B" evidence="1">
    <location>
        <position position="197"/>
    </location>
    <ligand>
        <name>4-aminobutanoate</name>
        <dbReference type="ChEBI" id="CHEBI:59888"/>
        <note>ligand shared between two neighboring rho subunits</note>
    </ligand>
</feature>
<feature type="glycosylation site" description="N-linked (GlcNAc...) asparagine" evidence="3">
    <location>
        <position position="120"/>
    </location>
</feature>
<feature type="glycosylation site" description="N-linked (GlcNAc...) asparagine" evidence="3">
    <location>
        <position position="254"/>
    </location>
</feature>
<feature type="disulfide bond" evidence="1">
    <location>
        <begin position="178"/>
        <end position="192"/>
    </location>
</feature>
<feature type="splice variant" id="VSP_044374" description="In isoform 2." evidence="6">
    <original>M</original>
    <variation>MVKPGGILPIKSPCTAACCIIDMCRM</variation>
    <location>
        <position position="1"/>
    </location>
</feature>
<feature type="sequence conflict" description="In Ref. 1; AAB81965." evidence="8" ref="1">
    <original>E</original>
    <variation>D</variation>
    <location>
        <position position="33"/>
    </location>
</feature>
<feature type="sequence conflict" description="In Ref. 1; AAB81965." evidence="8" ref="1">
    <original>P</original>
    <variation>A</variation>
    <location>
        <position position="52"/>
    </location>
</feature>
<feature type="sequence conflict" description="In Ref. 1; AAB81965." evidence="8" ref="1">
    <original>L</original>
    <variation>F</variation>
    <location>
        <position position="59"/>
    </location>
</feature>
<feature type="sequence conflict" description="In Ref. 1; AAB81965." evidence="8" ref="1">
    <original>L</original>
    <variation>V</variation>
    <location>
        <position position="88"/>
    </location>
</feature>
<feature type="sequence conflict" description="In Ref. 1; AAB81965." evidence="8" ref="1">
    <original>R</original>
    <variation>K</variation>
    <location>
        <position position="105"/>
    </location>
</feature>
<feature type="sequence conflict" description="In Ref. 1; AAB81965." evidence="8" ref="1">
    <original>R</original>
    <variation>K</variation>
    <location>
        <position position="109"/>
    </location>
</feature>
<feature type="sequence conflict" description="In Ref. 1; AAB81965." evidence="8" ref="1">
    <original>H</original>
    <variation>Q</variation>
    <location>
        <position position="149"/>
    </location>
</feature>
<feature type="sequence conflict" description="In Ref. 1; AAB81965." evidence="8" ref="1">
    <original>R</original>
    <variation>L</variation>
    <location>
        <position position="357"/>
    </location>
</feature>
<feature type="sequence conflict" description="In Ref. 1; AAB81965." evidence="8" ref="1">
    <original>M</original>
    <variation>V</variation>
    <location>
        <position position="366"/>
    </location>
</feature>
<feature type="sequence conflict" description="In Ref. 1; AAB81965." evidence="8" ref="1">
    <original>S</original>
    <variation>A</variation>
    <location>
        <position position="372"/>
    </location>
</feature>
<feature type="sequence conflict" description="In Ref. 1; AAB81965." evidence="8" ref="1">
    <original>R</original>
    <variation>T</variation>
    <location>
        <position position="394"/>
    </location>
</feature>
<feature type="sequence conflict" description="In Ref. 1; AAB81965." evidence="8" ref="1">
    <original>E</original>
    <variation>K</variation>
    <location>
        <position position="400"/>
    </location>
</feature>
<feature type="sequence conflict" description="In Ref. 1; AAB81965." evidence="8" ref="1">
    <original>R</original>
    <variation>K</variation>
    <location>
        <position position="421"/>
    </location>
</feature>
<feature type="sequence conflict" description="In Ref. 1; AAB81965." evidence="8" ref="1">
    <original>Q</original>
    <variation>R</variation>
    <location>
        <position position="429"/>
    </location>
</feature>
<sequence>MPYLMRLALVLFCLMALVESRKPRRKRWTGLLETSKPSHLYKKNLDVTKMRPGKPRPLLRVEDHDFTMRPAFGGPAIPVGVDVQVESLDSISEVDMDFTMTLYLRHYWRDERLAFPSSSNKSMTFDGRLVKKIWVPDVFFVHSKRSFIHDTTTDNIMLRVFPDGHVLYSMRITVTAMCNMDFSHFPLDSQTCSLELESYAYTDEDLMLYWKNGDESLKTDEKISLSQFLIQKFHTTSRLAFYSSTGWYNRLYINFTLRRHIFFFLLQTYFPATLMVMLSWVSFWIDHRAVPARVSLGIMTVLTMSTIITGVNASMPRVSYIRAVDIYLWVSFVFVFLSVLEYAAVNYLTTLQEQKERKFREKLPCMCGMLHSRTMMLDGSYSESEANSLAGYPRSHILPEEERPDNIVVHLALNSELTSSRKKGLLKGQMGLYIFQNTHAIDKYSRLIFPAFYIVFNLIYWSVFS</sequence>
<comment type="function">
    <text evidence="1 2 4 5">Rho subunit of the pentameric ligand-gated chloride channels responsible for mediating the effects of gamma-aminobutyric acid (GABA), the major inhibitory neurotransmitter in the brain (By similarity). Rho-containing GABA-gated chloride channels are a subclass of GABA(A) receptors (GABAARs) entirely composed of rho subunits, where GABA molecules bind at the rho intersubunit interfaces (By similarity). When activated by GABA, rho-GABAARs selectively allow the flow of chloride anions across the cell membrane down their electrochemical gradient (By similarity). Rho-2 GABAARs may contribute to the regulation of glial development in the cerebellum by controlling extrasynaptic transmission (PubMed:25422464). Rho-2 GABAARs are also involved in neuronal tonic (extrasynaptic) and phasic (synaptic) transmission in the Purkinje neurons of the cerebellum (PubMed:16945976). Rho-2 GABAARs expressed in retina may play a role in retinal neurotransmission (By similarity).</text>
</comment>
<comment type="catalytic activity">
    <reaction evidence="2">
        <text>chloride(in) = chloride(out)</text>
        <dbReference type="Rhea" id="RHEA:29823"/>
        <dbReference type="ChEBI" id="CHEBI:17996"/>
    </reaction>
</comment>
<comment type="subunit">
    <text evidence="2 5">Three rho subunits (rho-1/GBRR1, rho-2/GBRR2 and rho-3/GBRR3) coassemble either to form functional homopentamers or heteropentamers (PubMed:25422464). Rho-2 is unable to form a functional homopentamer (By similarity). Interacts with SQSTM1 (By similarity).</text>
</comment>
<comment type="subcellular location">
    <subcellularLocation>
        <location evidence="9">Postsynaptic cell membrane</location>
        <topology evidence="3">Multi-pass membrane protein</topology>
    </subcellularLocation>
    <subcellularLocation>
        <location evidence="5">Cell membrane</location>
        <topology evidence="3">Multi-pass membrane protein</topology>
    </subcellularLocation>
    <text evidence="5">Located at the plasma membrane of astrocytes, in soma and to some extent in distal processes.</text>
</comment>
<comment type="alternative products">
    <event type="alternative initiation"/>
    <isoform>
        <id>P56476-1</id>
        <name>1</name>
        <sequence type="displayed"/>
    </isoform>
    <isoform>
        <id>P56476-2</id>
        <name>2</name>
        <sequence type="described" ref="VSP_044374"/>
    </isoform>
</comment>
<comment type="tissue specificity">
    <text evidence="4 5">Expressed in the cerebellum.</text>
</comment>
<comment type="developmental stage">
    <text evidence="5">Expressed during early postnatal development of cerebellar ependymal glial cells. The expression is down-regulated in young mice, but limited to Purkinje neurons and a small fraction of glial cells in adults.</text>
</comment>
<comment type="domain">
    <text evidence="1">GABAARs subunits share a common topological structure: a peptide sequence made up of a long extracellular N-terminal, four transmembrane domains, intracellular or cytoplasmic domain located between the third and the fourth transmembrane domains.</text>
</comment>
<comment type="miscellaneous">
    <molecule>Isoform 2</molecule>
    <text evidence="8">Isoform 2 could be translated from an upstream initiator ATG located in frame within the first coding exon. The probability of a signal peptide within this isoform is very low.</text>
</comment>
<comment type="similarity">
    <text evidence="8">Belongs to the ligand-gated ion channel (TC 1.A.9) family. Gamma-aminobutyric acid receptor (TC 1.A.9.5) subfamily. GABRR2 sub-subfamily.</text>
</comment>